<protein>
    <recommendedName>
        <fullName>Max-interacting protein 1</fullName>
        <shortName>Max interactor 1</shortName>
    </recommendedName>
    <alternativeName>
        <fullName>Class C basic helix-loop-helix protein 11</fullName>
        <shortName>bHLHc11</shortName>
    </alternativeName>
</protein>
<name>MXI1_HUMAN</name>
<reference key="1">
    <citation type="journal article" date="1993" name="Cell">
        <title>Mxi1, a protein that specifically interacts with Max to bind Myc-Max recognition sites.</title>
        <authorList>
            <person name="Zervos A.S."/>
            <person name="Gyuris J."/>
            <person name="Brent R."/>
        </authorList>
    </citation>
    <scope>NUCLEOTIDE SEQUENCE [MRNA] (ISOFORM 1)</scope>
</reference>
<reference key="2">
    <citation type="journal article" date="1994" name="Cell">
        <authorList>
            <person name="Zervos A.S."/>
            <person name="Gyuris J."/>
            <person name="Brent R."/>
        </authorList>
    </citation>
    <scope>ERRATUM OF PUBMED:8425219</scope>
</reference>
<reference key="3">
    <citation type="journal article" date="1996" name="Genomics">
        <title>Genomic organization of human MXI1, a putative tumor suppressor gene.</title>
        <authorList>
            <person name="Wechsler D.S."/>
            <person name="Shelly C.A."/>
            <person name="Dang C.V."/>
        </authorList>
    </citation>
    <scope>NUCLEOTIDE SEQUENCE [GENOMIC DNA]</scope>
</reference>
<reference key="4">
    <citation type="journal article" date="1996" name="Gene">
        <title>Expression, regulation and polymorphism of the mxi1 genes.</title>
        <authorList>
            <person name="Shimizu E."/>
            <person name="Shirasawa H."/>
            <person name="Kodama K."/>
            <person name="Sato T."/>
            <person name="Shimizu B."/>
        </authorList>
    </citation>
    <scope>NUCLEOTIDE SEQUENCE [MRNA] (ISOFORM 2)</scope>
</reference>
<reference key="5">
    <citation type="submission" date="2003-05" db="EMBL/GenBank/DDBJ databases">
        <title>Cloning of human full-length CDSs in BD Creator(TM) system donor vector.</title>
        <authorList>
            <person name="Kalnine N."/>
            <person name="Chen X."/>
            <person name="Rolfs A."/>
            <person name="Halleck A."/>
            <person name="Hines L."/>
            <person name="Eisenstein S."/>
            <person name="Koundinya M."/>
            <person name="Raphael J."/>
            <person name="Moreira D."/>
            <person name="Kelley T."/>
            <person name="LaBaer J."/>
            <person name="Lin Y."/>
            <person name="Phelan M."/>
            <person name="Farmer A."/>
        </authorList>
    </citation>
    <scope>NUCLEOTIDE SEQUENCE [LARGE SCALE MRNA] (ISOFORM 4)</scope>
</reference>
<reference key="6">
    <citation type="submission" date="2004-06" db="EMBL/GenBank/DDBJ databases">
        <title>Cloning of human full open reading frames in Gateway(TM) system entry vector (pDONR201).</title>
        <authorList>
            <person name="Halleck A."/>
            <person name="Ebert L."/>
            <person name="Mkoundinya M."/>
            <person name="Schick M."/>
            <person name="Eisenstein S."/>
            <person name="Neubert P."/>
            <person name="Kstrang K."/>
            <person name="Schatten R."/>
            <person name="Shen B."/>
            <person name="Henze S."/>
            <person name="Mar W."/>
            <person name="Korn B."/>
            <person name="Zuo D."/>
            <person name="Hu Y."/>
            <person name="LaBaer J."/>
        </authorList>
    </citation>
    <scope>NUCLEOTIDE SEQUENCE [LARGE SCALE MRNA] (ISOFORM 1)</scope>
</reference>
<reference key="7">
    <citation type="journal article" date="2004" name="Nature">
        <title>The DNA sequence and comparative analysis of human chromosome 10.</title>
        <authorList>
            <person name="Deloukas P."/>
            <person name="Earthrowl M.E."/>
            <person name="Grafham D.V."/>
            <person name="Rubenfield M."/>
            <person name="French L."/>
            <person name="Steward C.A."/>
            <person name="Sims S.K."/>
            <person name="Jones M.C."/>
            <person name="Searle S."/>
            <person name="Scott C."/>
            <person name="Howe K."/>
            <person name="Hunt S.E."/>
            <person name="Andrews T.D."/>
            <person name="Gilbert J.G.R."/>
            <person name="Swarbreck D."/>
            <person name="Ashurst J.L."/>
            <person name="Taylor A."/>
            <person name="Battles J."/>
            <person name="Bird C.P."/>
            <person name="Ainscough R."/>
            <person name="Almeida J.P."/>
            <person name="Ashwell R.I.S."/>
            <person name="Ambrose K.D."/>
            <person name="Babbage A.K."/>
            <person name="Bagguley C.L."/>
            <person name="Bailey J."/>
            <person name="Banerjee R."/>
            <person name="Bates K."/>
            <person name="Beasley H."/>
            <person name="Bray-Allen S."/>
            <person name="Brown A.J."/>
            <person name="Brown J.Y."/>
            <person name="Burford D.C."/>
            <person name="Burrill W."/>
            <person name="Burton J."/>
            <person name="Cahill P."/>
            <person name="Camire D."/>
            <person name="Carter N.P."/>
            <person name="Chapman J.C."/>
            <person name="Clark S.Y."/>
            <person name="Clarke G."/>
            <person name="Clee C.M."/>
            <person name="Clegg S."/>
            <person name="Corby N."/>
            <person name="Coulson A."/>
            <person name="Dhami P."/>
            <person name="Dutta I."/>
            <person name="Dunn M."/>
            <person name="Faulkner L."/>
            <person name="Frankish A."/>
            <person name="Frankland J.A."/>
            <person name="Garner P."/>
            <person name="Garnett J."/>
            <person name="Gribble S."/>
            <person name="Griffiths C."/>
            <person name="Grocock R."/>
            <person name="Gustafson E."/>
            <person name="Hammond S."/>
            <person name="Harley J.L."/>
            <person name="Hart E."/>
            <person name="Heath P.D."/>
            <person name="Ho T.P."/>
            <person name="Hopkins B."/>
            <person name="Horne J."/>
            <person name="Howden P.J."/>
            <person name="Huckle E."/>
            <person name="Hynds C."/>
            <person name="Johnson C."/>
            <person name="Johnson D."/>
            <person name="Kana A."/>
            <person name="Kay M."/>
            <person name="Kimberley A.M."/>
            <person name="Kershaw J.K."/>
            <person name="Kokkinaki M."/>
            <person name="Laird G.K."/>
            <person name="Lawlor S."/>
            <person name="Lee H.M."/>
            <person name="Leongamornlert D.A."/>
            <person name="Laird G."/>
            <person name="Lloyd C."/>
            <person name="Lloyd D.M."/>
            <person name="Loveland J."/>
            <person name="Lovell J."/>
            <person name="McLaren S."/>
            <person name="McLay K.E."/>
            <person name="McMurray A."/>
            <person name="Mashreghi-Mohammadi M."/>
            <person name="Matthews L."/>
            <person name="Milne S."/>
            <person name="Nickerson T."/>
            <person name="Nguyen M."/>
            <person name="Overton-Larty E."/>
            <person name="Palmer S.A."/>
            <person name="Pearce A.V."/>
            <person name="Peck A.I."/>
            <person name="Pelan S."/>
            <person name="Phillimore B."/>
            <person name="Porter K."/>
            <person name="Rice C.M."/>
            <person name="Rogosin A."/>
            <person name="Ross M.T."/>
            <person name="Sarafidou T."/>
            <person name="Sehra H.K."/>
            <person name="Shownkeen R."/>
            <person name="Skuce C.D."/>
            <person name="Smith M."/>
            <person name="Standring L."/>
            <person name="Sycamore N."/>
            <person name="Tester J."/>
            <person name="Thorpe A."/>
            <person name="Torcasso W."/>
            <person name="Tracey A."/>
            <person name="Tromans A."/>
            <person name="Tsolas J."/>
            <person name="Wall M."/>
            <person name="Walsh J."/>
            <person name="Wang H."/>
            <person name="Weinstock K."/>
            <person name="West A.P."/>
            <person name="Willey D.L."/>
            <person name="Whitehead S.L."/>
            <person name="Wilming L."/>
            <person name="Wray P.W."/>
            <person name="Young L."/>
            <person name="Chen Y."/>
            <person name="Lovering R.C."/>
            <person name="Moschonas N.K."/>
            <person name="Siebert R."/>
            <person name="Fechtel K."/>
            <person name="Bentley D."/>
            <person name="Durbin R.M."/>
            <person name="Hubbard T."/>
            <person name="Doucette-Stamm L."/>
            <person name="Beck S."/>
            <person name="Smith D.R."/>
            <person name="Rogers J."/>
        </authorList>
    </citation>
    <scope>NUCLEOTIDE SEQUENCE [LARGE SCALE GENOMIC DNA]</scope>
</reference>
<reference key="8">
    <citation type="submission" date="2005-09" db="EMBL/GenBank/DDBJ databases">
        <authorList>
            <person name="Mural R.J."/>
            <person name="Istrail S."/>
            <person name="Sutton G.G."/>
            <person name="Florea L."/>
            <person name="Halpern A.L."/>
            <person name="Mobarry C.M."/>
            <person name="Lippert R."/>
            <person name="Walenz B."/>
            <person name="Shatkay H."/>
            <person name="Dew I."/>
            <person name="Miller J.R."/>
            <person name="Flanigan M.J."/>
            <person name="Edwards N.J."/>
            <person name="Bolanos R."/>
            <person name="Fasulo D."/>
            <person name="Halldorsson B.V."/>
            <person name="Hannenhalli S."/>
            <person name="Turner R."/>
            <person name="Yooseph S."/>
            <person name="Lu F."/>
            <person name="Nusskern D.R."/>
            <person name="Shue B.C."/>
            <person name="Zheng X.H."/>
            <person name="Zhong F."/>
            <person name="Delcher A.L."/>
            <person name="Huson D.H."/>
            <person name="Kravitz S.A."/>
            <person name="Mouchard L."/>
            <person name="Reinert K."/>
            <person name="Remington K.A."/>
            <person name="Clark A.G."/>
            <person name="Waterman M.S."/>
            <person name="Eichler E.E."/>
            <person name="Adams M.D."/>
            <person name="Hunkapiller M.W."/>
            <person name="Myers E.W."/>
            <person name="Venter J.C."/>
        </authorList>
    </citation>
    <scope>NUCLEOTIDE SEQUENCE [LARGE SCALE GENOMIC DNA]</scope>
</reference>
<reference key="9">
    <citation type="journal article" date="2004" name="Genome Res.">
        <title>The status, quality, and expansion of the NIH full-length cDNA project: the Mammalian Gene Collection (MGC).</title>
        <authorList>
            <consortium name="The MGC Project Team"/>
        </authorList>
    </citation>
    <scope>NUCLEOTIDE SEQUENCE [LARGE SCALE MRNA] (ISOFORMS 3 AND 4)</scope>
    <source>
        <tissue>Hippocampus</tissue>
        <tissue>Lung</tissue>
    </source>
</reference>
<reference key="10">
    <citation type="journal article" date="1995" name="Hum. Genet.">
        <title>Redefinition of the coding sequence of the MXI1 gene and identification of a polymorphic repeat in the 3' non-coding region that allows the detection of loss of heterozygosity of chromosome 10q25 in glioblastomas.</title>
        <authorList>
            <person name="Albarosa R."/>
            <person name="Didonato S."/>
            <person name="Finocchiaro G."/>
        </authorList>
    </citation>
    <scope>NUCLEOTIDE SEQUENCE [GENOMIC DNA] OF 216-228</scope>
</reference>
<reference key="11">
    <citation type="journal article" date="1995" name="Nat. Genet.">
        <title>Mutation of the MXI1 gene in prostate cancer.</title>
        <authorList>
            <person name="Eagle L.R."/>
            <person name="Yin X."/>
            <person name="Brothman A.R."/>
            <person name="Williams B.J."/>
            <person name="Atkin N.B."/>
            <person name="Prochownik E.V."/>
        </authorList>
    </citation>
    <scope>VARIANT PROSTATE CANCER ALA-152</scope>
</reference>
<proteinExistence type="evidence at protein level"/>
<accession>P50539</accession>
<accession>B1ANN7</accession>
<accession>D3DR25</accession>
<accession>D3DRA9</accession>
<accession>Q15887</accession>
<accession>Q6FHW2</accession>
<accession>Q96E53</accession>
<sequence>MERVKMINVQRLLEAAEFLERRERECEHGYASSFPSMPSPRLQHSKPPRRLSRAQKHSSGSSNTSTANRSTHNELEKNRRAHLRLCLERLKVLIPLGPDCTRHTTLGLLNKAKAHIKKLEEAERKSQHQLENLEREQRFLKWRLEQLQGPQEMERIRMDSIGSTISSDRSDSEREEIEVDVESTEFSHGEVDNISTTSISDIDDHSSLPSIGSDEGYSSASVKLSFTS</sequence>
<feature type="chain" id="PRO_0000127285" description="Max-interacting protein 1">
    <location>
        <begin position="1"/>
        <end position="228"/>
    </location>
</feature>
<feature type="domain" description="bHLH" evidence="2">
    <location>
        <begin position="67"/>
        <end position="119"/>
    </location>
</feature>
<feature type="region of interest" description="Disordered" evidence="3">
    <location>
        <begin position="29"/>
        <end position="76"/>
    </location>
</feature>
<feature type="region of interest" description="Disordered" evidence="3">
    <location>
        <begin position="161"/>
        <end position="228"/>
    </location>
</feature>
<feature type="compositionally biased region" description="Basic residues" evidence="3">
    <location>
        <begin position="43"/>
        <end position="56"/>
    </location>
</feature>
<feature type="compositionally biased region" description="Polar residues" evidence="3">
    <location>
        <begin position="57"/>
        <end position="70"/>
    </location>
</feature>
<feature type="compositionally biased region" description="Acidic residues" evidence="3">
    <location>
        <begin position="173"/>
        <end position="183"/>
    </location>
</feature>
<feature type="compositionally biased region" description="Polar residues" evidence="3">
    <location>
        <begin position="216"/>
        <end position="228"/>
    </location>
</feature>
<feature type="splice variant" id="VSP_012825" description="In isoform 2 and isoform 4." evidence="5 6 7">
    <location>
        <begin position="1"/>
        <end position="36"/>
    </location>
</feature>
<feature type="splice variant" id="VSP_037943" description="In isoform 3." evidence="5">
    <original>MERVKMINVQRLLEAAEFLERRERE</original>
    <variation>MGKRGRPRKEARCEGAGLAPAAPPAVPPAVAAPQPPALPEDPAGAKPRCPFSDIFNTSENSMEKHINTFLQNVQILLEAASYLEQIEKENKK</variation>
    <location>
        <begin position="1"/>
        <end position="25"/>
    </location>
</feature>
<feature type="splice variant" id="VSP_043170" description="In isoform 4." evidence="5 7">
    <location>
        <begin position="68"/>
        <end position="77"/>
    </location>
</feature>
<feature type="sequence variant" id="VAR_004499" description="In prostate cancer; dbSNP:rs137852603." evidence="4">
    <original>E</original>
    <variation>A</variation>
    <location>
        <position position="152"/>
    </location>
</feature>
<feature type="sequence conflict" description="In Ref. 1; AAA75508." evidence="8" ref="1">
    <original>S</original>
    <variation>T</variation>
    <location>
        <position position="61"/>
    </location>
</feature>
<gene>
    <name type="primary">MXI1</name>
    <name type="synonym">BHLHC11</name>
</gene>
<organism>
    <name type="scientific">Homo sapiens</name>
    <name type="common">Human</name>
    <dbReference type="NCBI Taxonomy" id="9606"/>
    <lineage>
        <taxon>Eukaryota</taxon>
        <taxon>Metazoa</taxon>
        <taxon>Chordata</taxon>
        <taxon>Craniata</taxon>
        <taxon>Vertebrata</taxon>
        <taxon>Euteleostomi</taxon>
        <taxon>Mammalia</taxon>
        <taxon>Eutheria</taxon>
        <taxon>Euarchontoglires</taxon>
        <taxon>Primates</taxon>
        <taxon>Haplorrhini</taxon>
        <taxon>Catarrhini</taxon>
        <taxon>Hominidae</taxon>
        <taxon>Homo</taxon>
    </lineage>
</organism>
<evidence type="ECO:0000250" key="1"/>
<evidence type="ECO:0000255" key="2">
    <source>
        <dbReference type="PROSITE-ProRule" id="PRU00981"/>
    </source>
</evidence>
<evidence type="ECO:0000256" key="3">
    <source>
        <dbReference type="SAM" id="MobiDB-lite"/>
    </source>
</evidence>
<evidence type="ECO:0000269" key="4">
    <source>
    </source>
</evidence>
<evidence type="ECO:0000303" key="5">
    <source>
    </source>
</evidence>
<evidence type="ECO:0000303" key="6">
    <source>
    </source>
</evidence>
<evidence type="ECO:0000303" key="7">
    <source ref="5"/>
</evidence>
<evidence type="ECO:0000305" key="8"/>
<comment type="function">
    <text>Transcriptional repressor. MXI1 binds with MAX to form a sequence-specific DNA-binding protein complex which recognizes the core sequence 5'-CAC[GA]TG-3'. MXI1 thus antagonizes MYC transcriptional activity by competing for MAX.</text>
</comment>
<comment type="subunit">
    <text evidence="1">Interacts with SMC3 (By similarity). Efficient DNA binding requires dimerization with another bHLH protein. Binds DNA as a heterodimer with MAX. Interacts with RNF17 (By similarity).</text>
</comment>
<comment type="interaction">
    <interactant intactId="EBI-752241">
        <id>P50539</id>
    </interactant>
    <interactant intactId="EBI-739580">
        <id>Q13137</id>
        <label>CALCOCO2</label>
    </interactant>
    <organismsDiffer>false</organismsDiffer>
    <experiments>3</experiments>
</comment>
<comment type="interaction">
    <interactant intactId="EBI-752241">
        <id>P50539</id>
    </interactant>
    <interactant intactId="EBI-10212065">
        <id>Q53RC5</id>
        <label>DKFZp547I014</label>
    </interactant>
    <organismsDiffer>false</organismsDiffer>
    <experiments>3</experiments>
</comment>
<comment type="interaction">
    <interactant intactId="EBI-752241">
        <id>P50539</id>
    </interactant>
    <interactant intactId="EBI-7416931">
        <id>O75356</id>
        <label>ENTPD5</label>
    </interactant>
    <organismsDiffer>false</organismsDiffer>
    <experiments>3</experiments>
</comment>
<comment type="interaction">
    <interactant intactId="EBI-752241">
        <id>P50539</id>
    </interactant>
    <interactant intactId="EBI-751711">
        <id>P61244</id>
        <label>MAX</label>
    </interactant>
    <organismsDiffer>false</organismsDiffer>
    <experiments>10</experiments>
</comment>
<comment type="interaction">
    <interactant intactId="EBI-752241">
        <id>P50539</id>
    </interactant>
    <interactant intactId="EBI-10218525">
        <id>P61244-2</id>
        <label>MAX</label>
    </interactant>
    <organismsDiffer>false</organismsDiffer>
    <experiments>3</experiments>
</comment>
<comment type="interaction">
    <interactant intactId="EBI-10211940">
        <id>P50539-3</id>
    </interactant>
    <interactant intactId="EBI-739580">
        <id>Q13137</id>
        <label>CALCOCO2</label>
    </interactant>
    <organismsDiffer>false</organismsDiffer>
    <experiments>6</experiments>
</comment>
<comment type="interaction">
    <interactant intactId="EBI-10211940">
        <id>P50539-3</id>
    </interactant>
    <interactant intactId="EBI-3867333">
        <id>A8MQ03</id>
        <label>CYSRT1</label>
    </interactant>
    <organismsDiffer>false</organismsDiffer>
    <experiments>3</experiments>
</comment>
<comment type="interaction">
    <interactant intactId="EBI-10211940">
        <id>P50539-3</id>
    </interactant>
    <interactant intactId="EBI-743414">
        <id>O95967</id>
        <label>EFEMP2</label>
    </interactant>
    <organismsDiffer>false</organismsDiffer>
    <experiments>3</experiments>
</comment>
<comment type="interaction">
    <interactant intactId="EBI-10211940">
        <id>P50539-3</id>
    </interactant>
    <interactant intactId="EBI-948001">
        <id>Q15323</id>
        <label>KRT31</label>
    </interactant>
    <organismsDiffer>false</organismsDiffer>
    <experiments>3</experiments>
</comment>
<comment type="interaction">
    <interactant intactId="EBI-10211940">
        <id>P50539-3</id>
    </interactant>
    <interactant intactId="EBI-10171697">
        <id>Q6A162</id>
        <label>KRT40</label>
    </interactant>
    <organismsDiffer>false</organismsDiffer>
    <experiments>3</experiments>
</comment>
<comment type="interaction">
    <interactant intactId="EBI-10211940">
        <id>P50539-3</id>
    </interactant>
    <interactant intactId="EBI-11959885">
        <id>Q07627</id>
        <label>KRTAP1-1</label>
    </interactant>
    <organismsDiffer>false</organismsDiffer>
    <experiments>3</experiments>
</comment>
<comment type="interaction">
    <interactant intactId="EBI-10211940">
        <id>P50539-3</id>
    </interactant>
    <interactant intactId="EBI-11749135">
        <id>Q8IUG1</id>
        <label>KRTAP1-3</label>
    </interactant>
    <organismsDiffer>false</organismsDiffer>
    <experiments>3</experiments>
</comment>
<comment type="interaction">
    <interactant intactId="EBI-10211940">
        <id>P50539-3</id>
    </interactant>
    <interactant intactId="EBI-10172150">
        <id>P60370</id>
        <label>KRTAP10-5</label>
    </interactant>
    <organismsDiffer>false</organismsDiffer>
    <experiments>3</experiments>
</comment>
<comment type="interaction">
    <interactant intactId="EBI-10211940">
        <id>P50539-3</id>
    </interactant>
    <interactant intactId="EBI-10172290">
        <id>P60409</id>
        <label>KRTAP10-7</label>
    </interactant>
    <organismsDiffer>false</organismsDiffer>
    <experiments>3</experiments>
</comment>
<comment type="interaction">
    <interactant intactId="EBI-10211940">
        <id>P50539-3</id>
    </interactant>
    <interactant intactId="EBI-10171774">
        <id>P60410</id>
        <label>KRTAP10-8</label>
    </interactant>
    <organismsDiffer>false</organismsDiffer>
    <experiments>6</experiments>
</comment>
<comment type="interaction">
    <interactant intactId="EBI-10211940">
        <id>P50539-3</id>
    </interactant>
    <interactant intactId="EBI-10172052">
        <id>P60411</id>
        <label>KRTAP10-9</label>
    </interactant>
    <organismsDiffer>false</organismsDiffer>
    <experiments>3</experiments>
</comment>
<comment type="interaction">
    <interactant intactId="EBI-10211940">
        <id>P50539-3</id>
    </interactant>
    <interactant intactId="EBI-11987425">
        <id>Q6L8G8</id>
        <label>KRTAP5-7</label>
    </interactant>
    <organismsDiffer>false</organismsDiffer>
    <experiments>3</experiments>
</comment>
<comment type="interaction">
    <interactant intactId="EBI-10211940">
        <id>P50539-3</id>
    </interactant>
    <interactant intactId="EBI-724076">
        <id>Q99750</id>
        <label>MDFI</label>
    </interactant>
    <organismsDiffer>false</organismsDiffer>
    <experiments>3</experiments>
</comment>
<comment type="interaction">
    <interactant intactId="EBI-10211940">
        <id>P50539-3</id>
    </interactant>
    <interactant intactId="EBI-945833">
        <id>Q7Z3S9</id>
        <label>NOTCH2NLA</label>
    </interactant>
    <organismsDiffer>false</organismsDiffer>
    <experiments>3</experiments>
</comment>
<comment type="interaction">
    <interactant intactId="EBI-10211940">
        <id>P50539-3</id>
    </interactant>
    <interactant intactId="EBI-22310682">
        <id>P0DPK4</id>
        <label>NOTCH2NLC</label>
    </interactant>
    <organismsDiffer>false</organismsDiffer>
    <experiments>3</experiments>
</comment>
<comment type="interaction">
    <interactant intactId="EBI-10211940">
        <id>P50539-3</id>
    </interactant>
    <interactant intactId="EBI-1249608">
        <id>Q5VY43</id>
        <label>PEAR1</label>
    </interactant>
    <organismsDiffer>false</organismsDiffer>
    <experiments>3</experiments>
</comment>
<comment type="interaction">
    <interactant intactId="EBI-10211940">
        <id>P50539-3</id>
    </interactant>
    <interactant intactId="EBI-625509">
        <id>Q8N720</id>
        <label>ZNF655</label>
    </interactant>
    <organismsDiffer>false</organismsDiffer>
    <experiments>3</experiments>
</comment>
<comment type="interaction">
    <interactant intactId="EBI-16436111">
        <id>P50539-4</id>
    </interactant>
    <interactant intactId="EBI-10171697">
        <id>Q6A162</id>
        <label>KRT40</label>
    </interactant>
    <organismsDiffer>false</organismsDiffer>
    <experiments>3</experiments>
</comment>
<comment type="interaction">
    <interactant intactId="EBI-16436111">
        <id>P50539-4</id>
    </interactant>
    <interactant intactId="EBI-739895">
        <id>Q8N6Y0</id>
        <label>USHBP1</label>
    </interactant>
    <organismsDiffer>false</organismsDiffer>
    <experiments>3</experiments>
</comment>
<comment type="subcellular location">
    <subcellularLocation>
        <location>Nucleus</location>
    </subcellularLocation>
</comment>
<comment type="alternative products">
    <event type="alternative splicing"/>
    <isoform>
        <id>P50539-1</id>
        <name>1</name>
        <sequence type="displayed"/>
    </isoform>
    <isoform>
        <id>P50539-2</id>
        <name>2</name>
        <sequence type="described" ref="VSP_012825"/>
    </isoform>
    <isoform>
        <id>P50539-3</id>
        <name>3</name>
        <sequence type="described" ref="VSP_037943"/>
    </isoform>
    <isoform>
        <id>P50539-4</id>
        <name>4</name>
        <sequence type="described" ref="VSP_012825 VSP_043170"/>
    </isoform>
</comment>
<comment type="tissue specificity">
    <text>High levels found in the brain, heart and lung while lower levels are seen in the liver, kidney and skeletal muscle.</text>
</comment>
<comment type="disease" evidence="4">
    <disease id="DI-02663">
        <name>Prostate cancer</name>
        <acronym>PC</acronym>
        <description>A malignancy originating in tissues of the prostate. Most prostate cancers are adenocarcinomas that develop in the acini of the prostatic ducts. Other rare histopathologic types of prostate cancer that occur in approximately 5% of patients include small cell carcinoma, mucinous carcinoma, prostatic ductal carcinoma, transitional cell carcinoma, squamous cell carcinoma, basal cell carcinoma, adenoid cystic carcinoma (basaloid), signet-ring cell carcinoma and neuroendocrine carcinoma.</description>
        <dbReference type="MIM" id="176807"/>
    </disease>
    <text>Disease susceptibility is associated with variants affecting the gene represented in this entry.</text>
</comment>
<comment type="online information" name="Atlas of Genetics and Cytogenetics in Oncology and Haematology">
    <link uri="https://atlasgeneticsoncology.org/gene/209/MXI1"/>
</comment>
<keyword id="KW-0025">Alternative splicing</keyword>
<keyword id="KW-0225">Disease variant</keyword>
<keyword id="KW-0238">DNA-binding</keyword>
<keyword id="KW-0539">Nucleus</keyword>
<keyword id="KW-1267">Proteomics identification</keyword>
<keyword id="KW-0656">Proto-oncogene</keyword>
<keyword id="KW-1185">Reference proteome</keyword>
<keyword id="KW-0678">Repressor</keyword>
<keyword id="KW-0804">Transcription</keyword>
<keyword id="KW-0805">Transcription regulation</keyword>
<dbReference type="EMBL" id="L07648">
    <property type="protein sequence ID" value="AAA75508.1"/>
    <property type="molecule type" value="mRNA"/>
</dbReference>
<dbReference type="EMBL" id="U32515">
    <property type="protein sequence ID" value="AAC50446.1"/>
    <property type="molecule type" value="Genomic_DNA"/>
</dbReference>
<dbReference type="EMBL" id="U32512">
    <property type="protein sequence ID" value="AAC50446.1"/>
    <property type="status" value="JOINED"/>
    <property type="molecule type" value="Genomic_DNA"/>
</dbReference>
<dbReference type="EMBL" id="U32513">
    <property type="protein sequence ID" value="AAC50446.1"/>
    <property type="status" value="JOINED"/>
    <property type="molecule type" value="Genomic_DNA"/>
</dbReference>
<dbReference type="EMBL" id="U32514">
    <property type="protein sequence ID" value="AAC50446.1"/>
    <property type="status" value="JOINED"/>
    <property type="molecule type" value="Genomic_DNA"/>
</dbReference>
<dbReference type="EMBL" id="D63940">
    <property type="protein sequence ID" value="BAA09972.1"/>
    <property type="molecule type" value="mRNA"/>
</dbReference>
<dbReference type="EMBL" id="BT007069">
    <property type="protein sequence ID" value="AAP35732.1"/>
    <property type="molecule type" value="mRNA"/>
</dbReference>
<dbReference type="EMBL" id="CR536576">
    <property type="protein sequence ID" value="CAG38813.1"/>
    <property type="molecule type" value="mRNA"/>
</dbReference>
<dbReference type="EMBL" id="AL360182">
    <property type="status" value="NOT_ANNOTATED_CDS"/>
    <property type="molecule type" value="Genomic_DNA"/>
</dbReference>
<dbReference type="EMBL" id="CH471066">
    <property type="protein sequence ID" value="EAW49565.1"/>
    <property type="molecule type" value="Genomic_DNA"/>
</dbReference>
<dbReference type="EMBL" id="CH471066">
    <property type="protein sequence ID" value="EAW49567.1"/>
    <property type="molecule type" value="Genomic_DNA"/>
</dbReference>
<dbReference type="EMBL" id="CH471066">
    <property type="protein sequence ID" value="EAW49568.1"/>
    <property type="molecule type" value="Genomic_DNA"/>
</dbReference>
<dbReference type="EMBL" id="CH471066">
    <property type="protein sequence ID" value="EAW49569.1"/>
    <property type="molecule type" value="Genomic_DNA"/>
</dbReference>
<dbReference type="EMBL" id="CH471066">
    <property type="protein sequence ID" value="EAW49570.1"/>
    <property type="molecule type" value="Genomic_DNA"/>
</dbReference>
<dbReference type="EMBL" id="BC012907">
    <property type="protein sequence ID" value="AAH12907.1"/>
    <property type="molecule type" value="mRNA"/>
</dbReference>
<dbReference type="EMBL" id="BC035128">
    <property type="protein sequence ID" value="AAH35128.2"/>
    <property type="molecule type" value="mRNA"/>
</dbReference>
<dbReference type="EMBL" id="S78470">
    <property type="protein sequence ID" value="AAD14282.1"/>
    <property type="molecule type" value="Genomic_DNA"/>
</dbReference>
<dbReference type="CCDS" id="CCDS31284.1">
    <molecule id="P50539-4"/>
</dbReference>
<dbReference type="CCDS" id="CCDS7563.1">
    <molecule id="P50539-3"/>
</dbReference>
<dbReference type="CCDS" id="CCDS7564.2">
    <molecule id="P50539-1"/>
</dbReference>
<dbReference type="PIR" id="A45182">
    <property type="entry name" value="A45182"/>
</dbReference>
<dbReference type="RefSeq" id="NP_001008541.1">
    <molecule id="P50539-4"/>
    <property type="nucleotide sequence ID" value="NM_001008541.1"/>
</dbReference>
<dbReference type="RefSeq" id="NP_005953.4">
    <molecule id="P50539-1"/>
    <property type="nucleotide sequence ID" value="NM_005962.4"/>
</dbReference>
<dbReference type="RefSeq" id="NP_569157.2">
    <molecule id="P50539-3"/>
    <property type="nucleotide sequence ID" value="NM_130439.3"/>
</dbReference>
<dbReference type="SMR" id="P50539"/>
<dbReference type="BioGRID" id="110686">
    <property type="interactions" value="49"/>
</dbReference>
<dbReference type="ComplexPortal" id="CPX-2515">
    <property type="entry name" value="MXI1-MAX transcriptional repressor complex"/>
</dbReference>
<dbReference type="CORUM" id="P50539"/>
<dbReference type="DIP" id="DIP-205N"/>
<dbReference type="ELM" id="P50539"/>
<dbReference type="FunCoup" id="P50539">
    <property type="interactions" value="3452"/>
</dbReference>
<dbReference type="IntAct" id="P50539">
    <property type="interactions" value="25"/>
</dbReference>
<dbReference type="MINT" id="P50539"/>
<dbReference type="STRING" id="9606.ENSP00000331152"/>
<dbReference type="GlyGen" id="P50539">
    <property type="glycosylation" value="2 sites, 1 O-linked glycan (2 sites)"/>
</dbReference>
<dbReference type="iPTMnet" id="P50539"/>
<dbReference type="PhosphoSitePlus" id="P50539"/>
<dbReference type="BioMuta" id="MXI1"/>
<dbReference type="DMDM" id="116242666"/>
<dbReference type="jPOST" id="P50539"/>
<dbReference type="MassIVE" id="P50539"/>
<dbReference type="PaxDb" id="9606-ENSP00000331152"/>
<dbReference type="PeptideAtlas" id="P50539"/>
<dbReference type="ProteomicsDB" id="56235">
    <molecule id="P50539-1"/>
</dbReference>
<dbReference type="ProteomicsDB" id="56236">
    <molecule id="P50539-2"/>
</dbReference>
<dbReference type="ProteomicsDB" id="56237">
    <molecule id="P50539-3"/>
</dbReference>
<dbReference type="ProteomicsDB" id="56238">
    <molecule id="P50539-4"/>
</dbReference>
<dbReference type="Antibodypedia" id="18346">
    <property type="antibodies" value="250 antibodies from 31 providers"/>
</dbReference>
<dbReference type="DNASU" id="4601"/>
<dbReference type="Ensembl" id="ENST00000239007.11">
    <molecule id="P50539-1"/>
    <property type="protein sequence ID" value="ENSP00000239007.7"/>
    <property type="gene ID" value="ENSG00000119950.21"/>
</dbReference>
<dbReference type="Ensembl" id="ENST00000332674.9">
    <molecule id="P50539-3"/>
    <property type="protein sequence ID" value="ENSP00000331152.5"/>
    <property type="gene ID" value="ENSG00000119950.21"/>
</dbReference>
<dbReference type="Ensembl" id="ENST00000361248.8">
    <molecule id="P50539-4"/>
    <property type="protein sequence ID" value="ENSP00000354606.4"/>
    <property type="gene ID" value="ENSG00000119950.21"/>
</dbReference>
<dbReference type="Ensembl" id="ENST00000369612.1">
    <molecule id="P50539-2"/>
    <property type="protein sequence ID" value="ENSP00000358625.1"/>
    <property type="gene ID" value="ENSG00000119950.21"/>
</dbReference>
<dbReference type="Ensembl" id="ENST00000650644.1">
    <molecule id="P50539-2"/>
    <property type="protein sequence ID" value="ENSP00000498900.1"/>
    <property type="gene ID" value="ENSG00000119950.21"/>
</dbReference>
<dbReference type="Ensembl" id="ENST00000650696.1">
    <molecule id="P50539-2"/>
    <property type="protein sequence ID" value="ENSP00000499158.1"/>
    <property type="gene ID" value="ENSG00000119950.21"/>
</dbReference>
<dbReference type="Ensembl" id="ENST00000650810.1">
    <molecule id="P50539-2"/>
    <property type="protein sequence ID" value="ENSP00000498390.1"/>
    <property type="gene ID" value="ENSG00000119950.21"/>
</dbReference>
<dbReference type="Ensembl" id="ENST00000650843.1">
    <molecule id="P50539-2"/>
    <property type="protein sequence ID" value="ENSP00000498547.1"/>
    <property type="gene ID" value="ENSG00000119950.21"/>
</dbReference>
<dbReference type="Ensembl" id="ENST00000650900.1">
    <molecule id="P50539-2"/>
    <property type="protein sequence ID" value="ENSP00000499209.1"/>
    <property type="gene ID" value="ENSG00000119950.21"/>
</dbReference>
<dbReference type="Ensembl" id="ENST00000650952.1">
    <molecule id="P50539-2"/>
    <property type="protein sequence ID" value="ENSP00000499161.1"/>
    <property type="gene ID" value="ENSG00000119950.21"/>
</dbReference>
<dbReference type="Ensembl" id="ENST00000651004.1">
    <molecule id="P50539-2"/>
    <property type="protein sequence ID" value="ENSP00000498396.1"/>
    <property type="gene ID" value="ENSG00000119950.21"/>
</dbReference>
<dbReference type="Ensembl" id="ENST00000651167.1">
    <molecule id="P50539-2"/>
    <property type="protein sequence ID" value="ENSP00000498764.1"/>
    <property type="gene ID" value="ENSG00000119950.21"/>
</dbReference>
<dbReference type="Ensembl" id="ENST00000651467.1">
    <molecule id="P50539-2"/>
    <property type="protein sequence ID" value="ENSP00000499128.1"/>
    <property type="gene ID" value="ENSG00000119950.21"/>
</dbReference>
<dbReference type="Ensembl" id="ENST00000651495.1">
    <molecule id="P50539-2"/>
    <property type="protein sequence ID" value="ENSP00000498536.1"/>
    <property type="gene ID" value="ENSG00000119950.21"/>
</dbReference>
<dbReference type="Ensembl" id="ENST00000651516.1">
    <molecule id="P50539-2"/>
    <property type="protein sequence ID" value="ENSP00000498873.1"/>
    <property type="gene ID" value="ENSG00000119950.21"/>
</dbReference>
<dbReference type="Ensembl" id="ENST00000651613.1">
    <molecule id="P50539-2"/>
    <property type="protein sequence ID" value="ENSP00000498554.1"/>
    <property type="gene ID" value="ENSG00000119950.21"/>
</dbReference>
<dbReference type="Ensembl" id="ENST00000651811.1">
    <molecule id="P50539-2"/>
    <property type="protein sequence ID" value="ENSP00000498472.1"/>
    <property type="gene ID" value="ENSG00000119950.21"/>
</dbReference>
<dbReference type="Ensembl" id="ENST00000651848.1">
    <molecule id="P50539-2"/>
    <property type="protein sequence ID" value="ENSP00000498238.1"/>
    <property type="gene ID" value="ENSG00000119950.21"/>
</dbReference>
<dbReference type="Ensembl" id="ENST00000651866.1">
    <molecule id="P50539-2"/>
    <property type="protein sequence ID" value="ENSP00000498306.1"/>
    <property type="gene ID" value="ENSG00000119950.21"/>
</dbReference>
<dbReference type="Ensembl" id="ENST00000652028.1">
    <molecule id="P50539-2"/>
    <property type="protein sequence ID" value="ENSP00000498928.1"/>
    <property type="gene ID" value="ENSG00000119950.21"/>
</dbReference>
<dbReference type="Ensembl" id="ENST00000652463.1">
    <molecule id="P50539-2"/>
    <property type="protein sequence ID" value="ENSP00000499087.1"/>
    <property type="gene ID" value="ENSG00000119950.21"/>
</dbReference>
<dbReference type="Ensembl" id="ENST00000652506.1">
    <molecule id="P50539-2"/>
    <property type="protein sequence ID" value="ENSP00000498573.1"/>
    <property type="gene ID" value="ENSG00000119950.21"/>
</dbReference>
<dbReference type="Ensembl" id="ENST00000652604.1">
    <molecule id="P50539-4"/>
    <property type="protein sequence ID" value="ENSP00000498971.1"/>
    <property type="gene ID" value="ENSG00000119950.21"/>
</dbReference>
<dbReference type="GeneID" id="4601"/>
<dbReference type="KEGG" id="hsa:4601"/>
<dbReference type="MANE-Select" id="ENST00000332674.9">
    <molecule id="P50539-3"/>
    <property type="protein sequence ID" value="ENSP00000331152.5"/>
    <property type="RefSeq nucleotide sequence ID" value="NM_130439.3"/>
    <property type="RefSeq protein sequence ID" value="NP_569157.2"/>
</dbReference>
<dbReference type="UCSC" id="uc001kyy.3">
    <molecule id="P50539-1"/>
    <property type="organism name" value="human"/>
</dbReference>
<dbReference type="AGR" id="HGNC:7534"/>
<dbReference type="CTD" id="4601"/>
<dbReference type="DisGeNET" id="4601"/>
<dbReference type="GeneCards" id="MXI1"/>
<dbReference type="HGNC" id="HGNC:7534">
    <property type="gene designation" value="MXI1"/>
</dbReference>
<dbReference type="HPA" id="ENSG00000119950">
    <property type="expression patterns" value="Low tissue specificity"/>
</dbReference>
<dbReference type="MalaCards" id="MXI1"/>
<dbReference type="MIM" id="176807">
    <property type="type" value="phenotype"/>
</dbReference>
<dbReference type="MIM" id="600020">
    <property type="type" value="gene"/>
</dbReference>
<dbReference type="neXtProt" id="NX_P50539"/>
<dbReference type="OpenTargets" id="ENSG00000119950"/>
<dbReference type="PharmGKB" id="PA31335"/>
<dbReference type="VEuPathDB" id="HostDB:ENSG00000119950"/>
<dbReference type="eggNOG" id="KOG2483">
    <property type="taxonomic scope" value="Eukaryota"/>
</dbReference>
<dbReference type="GeneTree" id="ENSGT00940000155809"/>
<dbReference type="HOGENOM" id="CLU_082604_0_0_1"/>
<dbReference type="InParanoid" id="P50539"/>
<dbReference type="OMA" id="ECTRHTT"/>
<dbReference type="OrthoDB" id="5920083at2759"/>
<dbReference type="PAN-GO" id="P50539">
    <property type="GO annotations" value="3 GO annotations based on evolutionary models"/>
</dbReference>
<dbReference type="PhylomeDB" id="P50539"/>
<dbReference type="TreeFam" id="TF315654"/>
<dbReference type="PathwayCommons" id="P50539"/>
<dbReference type="SignaLink" id="P50539"/>
<dbReference type="SIGNOR" id="P50539"/>
<dbReference type="BioGRID-ORCS" id="4601">
    <property type="hits" value="11 hits in 1178 CRISPR screens"/>
</dbReference>
<dbReference type="ChiTaRS" id="MXI1">
    <property type="organism name" value="human"/>
</dbReference>
<dbReference type="GeneWiki" id="MXI1"/>
<dbReference type="GenomeRNAi" id="4601"/>
<dbReference type="Pharos" id="P50539">
    <property type="development level" value="Tbio"/>
</dbReference>
<dbReference type="PRO" id="PR:P50539"/>
<dbReference type="Proteomes" id="UP000005640">
    <property type="component" value="Chromosome 10"/>
</dbReference>
<dbReference type="RNAct" id="P50539">
    <property type="molecule type" value="protein"/>
</dbReference>
<dbReference type="Bgee" id="ENSG00000119950">
    <property type="expression patterns" value="Expressed in cranial nerve II and 218 other cell types or tissues"/>
</dbReference>
<dbReference type="ExpressionAtlas" id="P50539">
    <property type="expression patterns" value="baseline and differential"/>
</dbReference>
<dbReference type="GO" id="GO:0000785">
    <property type="term" value="C:chromatin"/>
    <property type="evidence" value="ECO:0000247"/>
    <property type="project" value="NTNU_SB"/>
</dbReference>
<dbReference type="GO" id="GO:0005829">
    <property type="term" value="C:cytosol"/>
    <property type="evidence" value="ECO:0000314"/>
    <property type="project" value="HPA"/>
</dbReference>
<dbReference type="GO" id="GO:0005730">
    <property type="term" value="C:nucleolus"/>
    <property type="evidence" value="ECO:0000314"/>
    <property type="project" value="HPA"/>
</dbReference>
<dbReference type="GO" id="GO:0005654">
    <property type="term" value="C:nucleoplasm"/>
    <property type="evidence" value="ECO:0000314"/>
    <property type="project" value="HPA"/>
</dbReference>
<dbReference type="GO" id="GO:0005634">
    <property type="term" value="C:nucleus"/>
    <property type="evidence" value="ECO:0000304"/>
    <property type="project" value="ProtInc"/>
</dbReference>
<dbReference type="GO" id="GO:0090575">
    <property type="term" value="C:RNA polymerase II transcription regulator complex"/>
    <property type="evidence" value="ECO:0000314"/>
    <property type="project" value="NTNU_SB"/>
</dbReference>
<dbReference type="GO" id="GO:0000981">
    <property type="term" value="F:DNA-binding transcription factor activity, RNA polymerase II-specific"/>
    <property type="evidence" value="ECO:0000247"/>
    <property type="project" value="NTNU_SB"/>
</dbReference>
<dbReference type="GO" id="GO:0046983">
    <property type="term" value="F:protein dimerization activity"/>
    <property type="evidence" value="ECO:0007669"/>
    <property type="project" value="InterPro"/>
</dbReference>
<dbReference type="GO" id="GO:0000978">
    <property type="term" value="F:RNA polymerase II cis-regulatory region sequence-specific DNA binding"/>
    <property type="evidence" value="ECO:0000318"/>
    <property type="project" value="GO_Central"/>
</dbReference>
<dbReference type="GO" id="GO:0001825">
    <property type="term" value="P:blastocyst formation"/>
    <property type="evidence" value="ECO:0007669"/>
    <property type="project" value="Ensembl"/>
</dbReference>
<dbReference type="GO" id="GO:0000122">
    <property type="term" value="P:negative regulation of transcription by RNA polymerase II"/>
    <property type="evidence" value="ECO:0000314"/>
    <property type="project" value="NTNU_SB"/>
</dbReference>
<dbReference type="GO" id="GO:0006357">
    <property type="term" value="P:regulation of transcription by RNA polymerase II"/>
    <property type="evidence" value="ECO:0000318"/>
    <property type="project" value="GO_Central"/>
</dbReference>
<dbReference type="CDD" id="cd18930">
    <property type="entry name" value="bHLHzip_MXI1"/>
    <property type="match status" value="1"/>
</dbReference>
<dbReference type="FunFam" id="4.10.280.10:FF:000014">
    <property type="entry name" value="Max dimerization protein 1"/>
    <property type="match status" value="1"/>
</dbReference>
<dbReference type="Gene3D" id="4.10.280.10">
    <property type="entry name" value="Helix-loop-helix DNA-binding domain"/>
    <property type="match status" value="1"/>
</dbReference>
<dbReference type="InterPro" id="IPR011598">
    <property type="entry name" value="bHLH_dom"/>
</dbReference>
<dbReference type="InterPro" id="IPR036638">
    <property type="entry name" value="HLH_DNA-bd_sf"/>
</dbReference>
<dbReference type="PANTHER" id="PTHR11969">
    <property type="entry name" value="MAX DIMERIZATION, MAD"/>
    <property type="match status" value="1"/>
</dbReference>
<dbReference type="PANTHER" id="PTHR11969:SF13">
    <property type="entry name" value="MAX-INTERACTING PROTEIN 1"/>
    <property type="match status" value="1"/>
</dbReference>
<dbReference type="Pfam" id="PF00010">
    <property type="entry name" value="HLH"/>
    <property type="match status" value="1"/>
</dbReference>
<dbReference type="SMART" id="SM00353">
    <property type="entry name" value="HLH"/>
    <property type="match status" value="1"/>
</dbReference>
<dbReference type="SUPFAM" id="SSF47459">
    <property type="entry name" value="HLH, helix-loop-helix DNA-binding domain"/>
    <property type="match status" value="1"/>
</dbReference>
<dbReference type="PROSITE" id="PS50888">
    <property type="entry name" value="BHLH"/>
    <property type="match status" value="1"/>
</dbReference>